<gene>
    <name evidence="1" type="primary">queA</name>
    <name type="ordered locus">BP1050</name>
</gene>
<evidence type="ECO:0000255" key="1">
    <source>
        <dbReference type="HAMAP-Rule" id="MF_00113"/>
    </source>
</evidence>
<organism>
    <name type="scientific">Bordetella pertussis (strain Tohama I / ATCC BAA-589 / NCTC 13251)</name>
    <dbReference type="NCBI Taxonomy" id="257313"/>
    <lineage>
        <taxon>Bacteria</taxon>
        <taxon>Pseudomonadati</taxon>
        <taxon>Pseudomonadota</taxon>
        <taxon>Betaproteobacteria</taxon>
        <taxon>Burkholderiales</taxon>
        <taxon>Alcaligenaceae</taxon>
        <taxon>Bordetella</taxon>
    </lineage>
</organism>
<feature type="chain" id="PRO_0000165384" description="S-adenosylmethionine:tRNA ribosyltransferase-isomerase">
    <location>
        <begin position="1"/>
        <end position="347"/>
    </location>
</feature>
<sequence>MPTPLTLADFDYHLPPELIAQSPAAERGGSRLLHLDAASRLHDRRFPDLAGLLRPHDLLVFNDTRVIKARLTGQKATGGKVEVLVERITAPDRALAHVRASKSPGPGMRLRLAEAFEAEVLGREGELFDLRFPAPVLDLLDAHGATPLPPYITHAADATDERRYQTVYAREPGAVAAPTAGLHFDQPMLEQLAAQGVQRAFVTLHVGAGTFQPVRVQNLAEHIMHAEWYTVPEATVAAIARARAHGGRIVAVGTTSVRALESAAAQAQDGPLAAAQGDTRLFITPGYRYRAVDALLTNFHLPQSTLLMLVSALAGVEPIRRAYAHAVAERYRFFSYGDAMFIETPAP</sequence>
<protein>
    <recommendedName>
        <fullName evidence="1">S-adenosylmethionine:tRNA ribosyltransferase-isomerase</fullName>
        <ecNumber evidence="1">2.4.99.17</ecNumber>
    </recommendedName>
    <alternativeName>
        <fullName evidence="1">Queuosine biosynthesis protein QueA</fullName>
    </alternativeName>
</protein>
<keyword id="KW-0963">Cytoplasm</keyword>
<keyword id="KW-0671">Queuosine biosynthesis</keyword>
<keyword id="KW-1185">Reference proteome</keyword>
<keyword id="KW-0949">S-adenosyl-L-methionine</keyword>
<keyword id="KW-0808">Transferase</keyword>
<reference key="1">
    <citation type="journal article" date="2003" name="Nat. Genet.">
        <title>Comparative analysis of the genome sequences of Bordetella pertussis, Bordetella parapertussis and Bordetella bronchiseptica.</title>
        <authorList>
            <person name="Parkhill J."/>
            <person name="Sebaihia M."/>
            <person name="Preston A."/>
            <person name="Murphy L.D."/>
            <person name="Thomson N.R."/>
            <person name="Harris D.E."/>
            <person name="Holden M.T.G."/>
            <person name="Churcher C.M."/>
            <person name="Bentley S.D."/>
            <person name="Mungall K.L."/>
            <person name="Cerdeno-Tarraga A.-M."/>
            <person name="Temple L."/>
            <person name="James K.D."/>
            <person name="Harris B."/>
            <person name="Quail M.A."/>
            <person name="Achtman M."/>
            <person name="Atkin R."/>
            <person name="Baker S."/>
            <person name="Basham D."/>
            <person name="Bason N."/>
            <person name="Cherevach I."/>
            <person name="Chillingworth T."/>
            <person name="Collins M."/>
            <person name="Cronin A."/>
            <person name="Davis P."/>
            <person name="Doggett J."/>
            <person name="Feltwell T."/>
            <person name="Goble A."/>
            <person name="Hamlin N."/>
            <person name="Hauser H."/>
            <person name="Holroyd S."/>
            <person name="Jagels K."/>
            <person name="Leather S."/>
            <person name="Moule S."/>
            <person name="Norberczak H."/>
            <person name="O'Neil S."/>
            <person name="Ormond D."/>
            <person name="Price C."/>
            <person name="Rabbinowitsch E."/>
            <person name="Rutter S."/>
            <person name="Sanders M."/>
            <person name="Saunders D."/>
            <person name="Seeger K."/>
            <person name="Sharp S."/>
            <person name="Simmonds M."/>
            <person name="Skelton J."/>
            <person name="Squares R."/>
            <person name="Squares S."/>
            <person name="Stevens K."/>
            <person name="Unwin L."/>
            <person name="Whitehead S."/>
            <person name="Barrell B.G."/>
            <person name="Maskell D.J."/>
        </authorList>
    </citation>
    <scope>NUCLEOTIDE SEQUENCE [LARGE SCALE GENOMIC DNA]</scope>
    <source>
        <strain>Tohama I / ATCC BAA-589 / NCTC 13251</strain>
    </source>
</reference>
<dbReference type="EC" id="2.4.99.17" evidence="1"/>
<dbReference type="EMBL" id="BX640414">
    <property type="protein sequence ID" value="CAE41349.1"/>
    <property type="molecule type" value="Genomic_DNA"/>
</dbReference>
<dbReference type="RefSeq" id="NP_879835.1">
    <property type="nucleotide sequence ID" value="NC_002929.2"/>
</dbReference>
<dbReference type="RefSeq" id="WP_010930156.1">
    <property type="nucleotide sequence ID" value="NZ_CP039022.1"/>
</dbReference>
<dbReference type="SMR" id="Q7VZ81"/>
<dbReference type="STRING" id="257313.BP1050"/>
<dbReference type="PaxDb" id="257313-BP1050"/>
<dbReference type="GeneID" id="69600973"/>
<dbReference type="KEGG" id="bpe:BP1050"/>
<dbReference type="PATRIC" id="fig|257313.5.peg.1122"/>
<dbReference type="eggNOG" id="COG0809">
    <property type="taxonomic scope" value="Bacteria"/>
</dbReference>
<dbReference type="HOGENOM" id="CLU_039110_1_0_4"/>
<dbReference type="UniPathway" id="UPA00392"/>
<dbReference type="Proteomes" id="UP000002676">
    <property type="component" value="Chromosome"/>
</dbReference>
<dbReference type="GO" id="GO:0005737">
    <property type="term" value="C:cytoplasm"/>
    <property type="evidence" value="ECO:0007669"/>
    <property type="project" value="UniProtKB-SubCell"/>
</dbReference>
<dbReference type="GO" id="GO:0051075">
    <property type="term" value="F:S-adenosylmethionine:tRNA ribosyltransferase-isomerase activity"/>
    <property type="evidence" value="ECO:0007669"/>
    <property type="project" value="UniProtKB-EC"/>
</dbReference>
<dbReference type="GO" id="GO:0008616">
    <property type="term" value="P:queuosine biosynthetic process"/>
    <property type="evidence" value="ECO:0007669"/>
    <property type="project" value="UniProtKB-UniRule"/>
</dbReference>
<dbReference type="GO" id="GO:0002099">
    <property type="term" value="P:tRNA wobble guanine modification"/>
    <property type="evidence" value="ECO:0007669"/>
    <property type="project" value="TreeGrafter"/>
</dbReference>
<dbReference type="FunFam" id="3.40.1780.10:FF:000001">
    <property type="entry name" value="S-adenosylmethionine:tRNA ribosyltransferase-isomerase"/>
    <property type="match status" value="1"/>
</dbReference>
<dbReference type="Gene3D" id="2.40.10.240">
    <property type="entry name" value="QueA-like"/>
    <property type="match status" value="1"/>
</dbReference>
<dbReference type="Gene3D" id="3.40.1780.10">
    <property type="entry name" value="QueA-like"/>
    <property type="match status" value="1"/>
</dbReference>
<dbReference type="HAMAP" id="MF_00113">
    <property type="entry name" value="QueA"/>
    <property type="match status" value="1"/>
</dbReference>
<dbReference type="InterPro" id="IPR003699">
    <property type="entry name" value="QueA"/>
</dbReference>
<dbReference type="InterPro" id="IPR042118">
    <property type="entry name" value="QueA_dom1"/>
</dbReference>
<dbReference type="InterPro" id="IPR042119">
    <property type="entry name" value="QueA_dom2"/>
</dbReference>
<dbReference type="InterPro" id="IPR036100">
    <property type="entry name" value="QueA_sf"/>
</dbReference>
<dbReference type="NCBIfam" id="NF001140">
    <property type="entry name" value="PRK00147.1"/>
    <property type="match status" value="1"/>
</dbReference>
<dbReference type="NCBIfam" id="TIGR00113">
    <property type="entry name" value="queA"/>
    <property type="match status" value="1"/>
</dbReference>
<dbReference type="PANTHER" id="PTHR30307">
    <property type="entry name" value="S-ADENOSYLMETHIONINE:TRNA RIBOSYLTRANSFERASE-ISOMERASE"/>
    <property type="match status" value="1"/>
</dbReference>
<dbReference type="PANTHER" id="PTHR30307:SF0">
    <property type="entry name" value="S-ADENOSYLMETHIONINE:TRNA RIBOSYLTRANSFERASE-ISOMERASE"/>
    <property type="match status" value="1"/>
</dbReference>
<dbReference type="Pfam" id="PF02547">
    <property type="entry name" value="Queuosine_synth"/>
    <property type="match status" value="1"/>
</dbReference>
<dbReference type="SUPFAM" id="SSF111337">
    <property type="entry name" value="QueA-like"/>
    <property type="match status" value="1"/>
</dbReference>
<name>QUEA_BORPE</name>
<proteinExistence type="inferred from homology"/>
<accession>Q7VZ81</accession>
<comment type="function">
    <text evidence="1">Transfers and isomerizes the ribose moiety from AdoMet to the 7-aminomethyl group of 7-deazaguanine (preQ1-tRNA) to give epoxyqueuosine (oQ-tRNA).</text>
</comment>
<comment type="catalytic activity">
    <reaction evidence="1">
        <text>7-aminomethyl-7-carbaguanosine(34) in tRNA + S-adenosyl-L-methionine = epoxyqueuosine(34) in tRNA + adenine + L-methionine + 2 H(+)</text>
        <dbReference type="Rhea" id="RHEA:32155"/>
        <dbReference type="Rhea" id="RHEA-COMP:10342"/>
        <dbReference type="Rhea" id="RHEA-COMP:18582"/>
        <dbReference type="ChEBI" id="CHEBI:15378"/>
        <dbReference type="ChEBI" id="CHEBI:16708"/>
        <dbReference type="ChEBI" id="CHEBI:57844"/>
        <dbReference type="ChEBI" id="CHEBI:59789"/>
        <dbReference type="ChEBI" id="CHEBI:82833"/>
        <dbReference type="ChEBI" id="CHEBI:194443"/>
        <dbReference type="EC" id="2.4.99.17"/>
    </reaction>
</comment>
<comment type="pathway">
    <text evidence="1">tRNA modification; tRNA-queuosine biosynthesis.</text>
</comment>
<comment type="subunit">
    <text evidence="1">Monomer.</text>
</comment>
<comment type="subcellular location">
    <subcellularLocation>
        <location evidence="1">Cytoplasm</location>
    </subcellularLocation>
</comment>
<comment type="similarity">
    <text evidence="1">Belongs to the QueA family.</text>
</comment>